<dbReference type="EMBL" id="AE014295">
    <property type="protein sequence ID" value="AAN24755.1"/>
    <property type="molecule type" value="Genomic_DNA"/>
</dbReference>
<dbReference type="RefSeq" id="NP_696119.1">
    <property type="nucleotide sequence ID" value="NC_004307.2"/>
</dbReference>
<dbReference type="SMR" id="Q8G5R1"/>
<dbReference type="STRING" id="206672.BL0943"/>
<dbReference type="EnsemblBacteria" id="AAN24755">
    <property type="protein sequence ID" value="AAN24755"/>
    <property type="gene ID" value="BL0943"/>
</dbReference>
<dbReference type="KEGG" id="blo:BL0943"/>
<dbReference type="PATRIC" id="fig|206672.9.peg.645"/>
<dbReference type="HOGENOM" id="CLU_014218_8_2_11"/>
<dbReference type="OrthoDB" id="9804062at2"/>
<dbReference type="Proteomes" id="UP000000439">
    <property type="component" value="Chromosome"/>
</dbReference>
<dbReference type="GO" id="GO:0009376">
    <property type="term" value="C:HslUV protease complex"/>
    <property type="evidence" value="ECO:0007669"/>
    <property type="project" value="TreeGrafter"/>
</dbReference>
<dbReference type="GO" id="GO:0005524">
    <property type="term" value="F:ATP binding"/>
    <property type="evidence" value="ECO:0007669"/>
    <property type="project" value="UniProtKB-UniRule"/>
</dbReference>
<dbReference type="GO" id="GO:0016887">
    <property type="term" value="F:ATP hydrolysis activity"/>
    <property type="evidence" value="ECO:0007669"/>
    <property type="project" value="InterPro"/>
</dbReference>
<dbReference type="GO" id="GO:0140662">
    <property type="term" value="F:ATP-dependent protein folding chaperone"/>
    <property type="evidence" value="ECO:0007669"/>
    <property type="project" value="InterPro"/>
</dbReference>
<dbReference type="GO" id="GO:0046983">
    <property type="term" value="F:protein dimerization activity"/>
    <property type="evidence" value="ECO:0007669"/>
    <property type="project" value="InterPro"/>
</dbReference>
<dbReference type="GO" id="GO:0051082">
    <property type="term" value="F:unfolded protein binding"/>
    <property type="evidence" value="ECO:0007669"/>
    <property type="project" value="UniProtKB-UniRule"/>
</dbReference>
<dbReference type="GO" id="GO:0008270">
    <property type="term" value="F:zinc ion binding"/>
    <property type="evidence" value="ECO:0007669"/>
    <property type="project" value="InterPro"/>
</dbReference>
<dbReference type="GO" id="GO:0051301">
    <property type="term" value="P:cell division"/>
    <property type="evidence" value="ECO:0007669"/>
    <property type="project" value="TreeGrafter"/>
</dbReference>
<dbReference type="GO" id="GO:0051603">
    <property type="term" value="P:proteolysis involved in protein catabolic process"/>
    <property type="evidence" value="ECO:0007669"/>
    <property type="project" value="TreeGrafter"/>
</dbReference>
<dbReference type="CDD" id="cd19497">
    <property type="entry name" value="RecA-like_ClpX"/>
    <property type="match status" value="1"/>
</dbReference>
<dbReference type="FunFam" id="1.10.8.60:FF:000002">
    <property type="entry name" value="ATP-dependent Clp protease ATP-binding subunit ClpX"/>
    <property type="match status" value="1"/>
</dbReference>
<dbReference type="Gene3D" id="1.10.8.60">
    <property type="match status" value="1"/>
</dbReference>
<dbReference type="Gene3D" id="6.20.220.10">
    <property type="entry name" value="ClpX chaperone, C4-type zinc finger domain"/>
    <property type="match status" value="1"/>
</dbReference>
<dbReference type="Gene3D" id="3.40.50.300">
    <property type="entry name" value="P-loop containing nucleotide triphosphate hydrolases"/>
    <property type="match status" value="1"/>
</dbReference>
<dbReference type="HAMAP" id="MF_00175">
    <property type="entry name" value="ClpX"/>
    <property type="match status" value="1"/>
</dbReference>
<dbReference type="InterPro" id="IPR003593">
    <property type="entry name" value="AAA+_ATPase"/>
</dbReference>
<dbReference type="InterPro" id="IPR050052">
    <property type="entry name" value="ATP-dep_Clp_protease_ClpX"/>
</dbReference>
<dbReference type="InterPro" id="IPR003959">
    <property type="entry name" value="ATPase_AAA_core"/>
</dbReference>
<dbReference type="InterPro" id="IPR019489">
    <property type="entry name" value="Clp_ATPase_C"/>
</dbReference>
<dbReference type="InterPro" id="IPR004487">
    <property type="entry name" value="Clp_protease_ATP-bd_su_ClpX"/>
</dbReference>
<dbReference type="InterPro" id="IPR046425">
    <property type="entry name" value="ClpX_bact"/>
</dbReference>
<dbReference type="InterPro" id="IPR027417">
    <property type="entry name" value="P-loop_NTPase"/>
</dbReference>
<dbReference type="InterPro" id="IPR010603">
    <property type="entry name" value="Znf_CppX_C4"/>
</dbReference>
<dbReference type="InterPro" id="IPR038366">
    <property type="entry name" value="Znf_CppX_C4_sf"/>
</dbReference>
<dbReference type="NCBIfam" id="TIGR00382">
    <property type="entry name" value="clpX"/>
    <property type="match status" value="1"/>
</dbReference>
<dbReference type="NCBIfam" id="NF003745">
    <property type="entry name" value="PRK05342.1"/>
    <property type="match status" value="1"/>
</dbReference>
<dbReference type="PANTHER" id="PTHR48102:SF7">
    <property type="entry name" value="ATP-DEPENDENT CLP PROTEASE ATP-BINDING SUBUNIT CLPX-LIKE, MITOCHONDRIAL"/>
    <property type="match status" value="1"/>
</dbReference>
<dbReference type="PANTHER" id="PTHR48102">
    <property type="entry name" value="ATP-DEPENDENT CLP PROTEASE ATP-BINDING SUBUNIT CLPX-LIKE, MITOCHONDRIAL-RELATED"/>
    <property type="match status" value="1"/>
</dbReference>
<dbReference type="Pfam" id="PF07724">
    <property type="entry name" value="AAA_2"/>
    <property type="match status" value="1"/>
</dbReference>
<dbReference type="Pfam" id="PF10431">
    <property type="entry name" value="ClpB_D2-small"/>
    <property type="match status" value="1"/>
</dbReference>
<dbReference type="Pfam" id="PF06689">
    <property type="entry name" value="zf-C4_ClpX"/>
    <property type="match status" value="1"/>
</dbReference>
<dbReference type="SMART" id="SM00382">
    <property type="entry name" value="AAA"/>
    <property type="match status" value="1"/>
</dbReference>
<dbReference type="SMART" id="SM01086">
    <property type="entry name" value="ClpB_D2-small"/>
    <property type="match status" value="1"/>
</dbReference>
<dbReference type="SMART" id="SM00994">
    <property type="entry name" value="zf-C4_ClpX"/>
    <property type="match status" value="1"/>
</dbReference>
<dbReference type="SUPFAM" id="SSF57716">
    <property type="entry name" value="Glucocorticoid receptor-like (DNA-binding domain)"/>
    <property type="match status" value="1"/>
</dbReference>
<dbReference type="SUPFAM" id="SSF52540">
    <property type="entry name" value="P-loop containing nucleoside triphosphate hydrolases"/>
    <property type="match status" value="1"/>
</dbReference>
<dbReference type="PROSITE" id="PS51902">
    <property type="entry name" value="CLPX_ZB"/>
    <property type="match status" value="1"/>
</dbReference>
<accession>Q8G5R1</accession>
<organism>
    <name type="scientific">Bifidobacterium longum (strain NCC 2705)</name>
    <dbReference type="NCBI Taxonomy" id="206672"/>
    <lineage>
        <taxon>Bacteria</taxon>
        <taxon>Bacillati</taxon>
        <taxon>Actinomycetota</taxon>
        <taxon>Actinomycetes</taxon>
        <taxon>Bifidobacteriales</taxon>
        <taxon>Bifidobacteriaceae</taxon>
        <taxon>Bifidobacterium</taxon>
    </lineage>
</organism>
<keyword id="KW-0067">ATP-binding</keyword>
<keyword id="KW-0143">Chaperone</keyword>
<keyword id="KW-0479">Metal-binding</keyword>
<keyword id="KW-0547">Nucleotide-binding</keyword>
<keyword id="KW-1185">Reference proteome</keyword>
<keyword id="KW-0862">Zinc</keyword>
<name>CLPX_BIFLO</name>
<proteinExistence type="inferred from homology"/>
<reference key="1">
    <citation type="journal article" date="2002" name="Proc. Natl. Acad. Sci. U.S.A.">
        <title>The genome sequence of Bifidobacterium longum reflects its adaptation to the human gastrointestinal tract.</title>
        <authorList>
            <person name="Schell M.A."/>
            <person name="Karmirantzou M."/>
            <person name="Snel B."/>
            <person name="Vilanova D."/>
            <person name="Berger B."/>
            <person name="Pessi G."/>
            <person name="Zwahlen M.-C."/>
            <person name="Desiere F."/>
            <person name="Bork P."/>
            <person name="Delley M."/>
            <person name="Pridmore R.D."/>
            <person name="Arigoni F."/>
        </authorList>
    </citation>
    <scope>NUCLEOTIDE SEQUENCE [LARGE SCALE GENOMIC DNA]</scope>
    <source>
        <strain>NCC 2705</strain>
    </source>
</reference>
<gene>
    <name evidence="1" type="primary">clpX</name>
    <name type="ordered locus">BL0943</name>
</gene>
<evidence type="ECO:0000255" key="1">
    <source>
        <dbReference type="HAMAP-Rule" id="MF_00175"/>
    </source>
</evidence>
<evidence type="ECO:0000255" key="2">
    <source>
        <dbReference type="PROSITE-ProRule" id="PRU01250"/>
    </source>
</evidence>
<evidence type="ECO:0000256" key="3">
    <source>
        <dbReference type="SAM" id="MobiDB-lite"/>
    </source>
</evidence>
<feature type="chain" id="PRO_0000160318" description="ATP-dependent Clp protease ATP-binding subunit ClpX">
    <location>
        <begin position="1"/>
        <end position="472"/>
    </location>
</feature>
<feature type="domain" description="ClpX-type ZB" evidence="2">
    <location>
        <begin position="1"/>
        <end position="55"/>
    </location>
</feature>
<feature type="region of interest" description="Insert">
    <location>
        <begin position="105"/>
        <end position="135"/>
    </location>
</feature>
<feature type="region of interest" description="Disordered" evidence="3">
    <location>
        <begin position="107"/>
        <end position="139"/>
    </location>
</feature>
<feature type="compositionally biased region" description="Polar residues" evidence="3">
    <location>
        <begin position="109"/>
        <end position="131"/>
    </location>
</feature>
<feature type="binding site" evidence="2">
    <location>
        <position position="14"/>
    </location>
    <ligand>
        <name>Zn(2+)</name>
        <dbReference type="ChEBI" id="CHEBI:29105"/>
    </ligand>
</feature>
<feature type="binding site" evidence="2">
    <location>
        <position position="17"/>
    </location>
    <ligand>
        <name>Zn(2+)</name>
        <dbReference type="ChEBI" id="CHEBI:29105"/>
    </ligand>
</feature>
<feature type="binding site" evidence="2">
    <location>
        <position position="36"/>
    </location>
    <ligand>
        <name>Zn(2+)</name>
        <dbReference type="ChEBI" id="CHEBI:29105"/>
    </ligand>
</feature>
<feature type="binding site" evidence="2">
    <location>
        <position position="39"/>
    </location>
    <ligand>
        <name>Zn(2+)</name>
        <dbReference type="ChEBI" id="CHEBI:29105"/>
    </ligand>
</feature>
<feature type="binding site" evidence="1">
    <location>
        <begin position="155"/>
        <end position="162"/>
    </location>
    <ligand>
        <name>ATP</name>
        <dbReference type="ChEBI" id="CHEBI:30616"/>
    </ligand>
</feature>
<comment type="function">
    <text evidence="1">ATP-dependent specificity component of the Clp protease. It directs the protease to specific substrates. Can perform chaperone functions in the absence of ClpP.</text>
</comment>
<comment type="subunit">
    <text evidence="1">Component of the ClpX-ClpP complex. Forms a hexameric ring that, in the presence of ATP, binds to fourteen ClpP subunits assembled into a disk-like structure with a central cavity, resembling the structure of eukaryotic proteasomes.</text>
</comment>
<comment type="similarity">
    <text evidence="1">Belongs to the ClpX chaperone family.</text>
</comment>
<sequence length="472" mass="51714">MGRVVSYNEDVPRCTFCGKTEHQVRKLVAGPNASICDECIALCVDIISEERVKDAEVNSLSLPKPAQIFDYLNRYVIGQENAKRALSVAVYNHYKRVNMELQESAEQLDGNNGHSGQTSKQAKQSVPTQTRATRRSNDPLADVEVAKSNILLLGPTGVGKTYLAQALARVMNVPFVITDATTLTEAGYVGDDVETVLQRLLQAADGDVSRAQHGIIYIDEIDKIARKSGENTSITRDVSGEGVQQALLKILEGTIASVPLEGTRKHKEQDVAQMDTRGILFICGGAFVGLTDIVRKRLGRRETGFGANWHDADMKDEELLEQVNADDLAEFGLLPEFIGRLPVTSVLKELTVDDLTAILTQPANALIKQYRKLFAVDGVDLQFTEQAIRAIADIAIKQGTGARGLRSIIERTLQDTMFQLPSLDDVRQVIVDKASVEGSSTPKLLREAVDVPQGRLKVAQSVLLDRVRTHEA</sequence>
<protein>
    <recommendedName>
        <fullName evidence="1">ATP-dependent Clp protease ATP-binding subunit ClpX</fullName>
    </recommendedName>
</protein>